<organism>
    <name type="scientific">Scheffersomyces stipitis (strain ATCC 58785 / CBS 6054 / NBRC 10063 / NRRL Y-11545)</name>
    <name type="common">Yeast</name>
    <name type="synonym">Pichia stipitis</name>
    <dbReference type="NCBI Taxonomy" id="322104"/>
    <lineage>
        <taxon>Eukaryota</taxon>
        <taxon>Fungi</taxon>
        <taxon>Dikarya</taxon>
        <taxon>Ascomycota</taxon>
        <taxon>Saccharomycotina</taxon>
        <taxon>Pichiomycetes</taxon>
        <taxon>Debaryomycetaceae</taxon>
        <taxon>Scheffersomyces</taxon>
    </lineage>
</organism>
<name>H33_PICST</name>
<reference key="1">
    <citation type="journal article" date="2007" name="Nat. Biotechnol.">
        <title>Genome sequence of the lignocellulose-bioconverting and xylose-fermenting yeast Pichia stipitis.</title>
        <authorList>
            <person name="Jeffries T.W."/>
            <person name="Grigoriev I.V."/>
            <person name="Grimwood J."/>
            <person name="Laplaza J.M."/>
            <person name="Aerts A."/>
            <person name="Salamov A."/>
            <person name="Schmutz J."/>
            <person name="Lindquist E."/>
            <person name="Dehal P."/>
            <person name="Shapiro H."/>
            <person name="Jin Y.-S."/>
            <person name="Passoth V."/>
            <person name="Richardson P.M."/>
        </authorList>
    </citation>
    <scope>NUCLEOTIDE SEQUENCE [LARGE SCALE GENOMIC DNA]</scope>
    <source>
        <strain>ATCC 58785 / CBS 6054 / NBRC 10063 / NRRL Y-11545</strain>
    </source>
</reference>
<accession>A3GHN6</accession>
<keyword id="KW-0007">Acetylation</keyword>
<keyword id="KW-0158">Chromosome</keyword>
<keyword id="KW-0238">DNA-binding</keyword>
<keyword id="KW-0488">Methylation</keyword>
<keyword id="KW-0544">Nucleosome core</keyword>
<keyword id="KW-0539">Nucleus</keyword>
<keyword id="KW-0597">Phosphoprotein</keyword>
<keyword id="KW-1185">Reference proteome</keyword>
<feature type="initiator methionine" description="Removed" evidence="1">
    <location>
        <position position="1"/>
    </location>
</feature>
<feature type="chain" id="PRO_0000297754" description="Histone H3.3">
    <location>
        <begin position="2"/>
        <end position="136"/>
    </location>
</feature>
<feature type="region of interest" description="Disordered" evidence="2">
    <location>
        <begin position="1"/>
        <end position="42"/>
    </location>
</feature>
<feature type="modified residue" description="N6,N6,N6-trimethyllysine; alternate" evidence="1">
    <location>
        <position position="5"/>
    </location>
</feature>
<feature type="modified residue" description="N6,N6-dimethyllysine; alternate" evidence="1">
    <location>
        <position position="5"/>
    </location>
</feature>
<feature type="modified residue" description="N6-methyllysine; alternate" evidence="1">
    <location>
        <position position="5"/>
    </location>
</feature>
<feature type="modified residue" description="N6-acetyllysine; alternate" evidence="1">
    <location>
        <position position="10"/>
    </location>
</feature>
<feature type="modified residue" description="N6-methyllysine; alternate" evidence="1">
    <location>
        <position position="10"/>
    </location>
</feature>
<feature type="modified residue" description="Phosphoserine" evidence="1">
    <location>
        <position position="11"/>
    </location>
</feature>
<feature type="modified residue" description="N6,N6-dimethyllysine; alternate" evidence="1">
    <location>
        <position position="15"/>
    </location>
</feature>
<feature type="modified residue" description="N6-acetyllysine; alternate" evidence="1">
    <location>
        <position position="15"/>
    </location>
</feature>
<feature type="modified residue" description="N6-acetyllysine; alternate" evidence="1">
    <location>
        <position position="19"/>
    </location>
</feature>
<feature type="modified residue" description="N6-methyllysine; alternate" evidence="1">
    <location>
        <position position="19"/>
    </location>
</feature>
<feature type="modified residue" description="N6-acetyllysine; alternate" evidence="1">
    <location>
        <position position="24"/>
    </location>
</feature>
<feature type="modified residue" description="N6-methyllysine; alternate" evidence="1">
    <location>
        <position position="24"/>
    </location>
</feature>
<feature type="modified residue" description="N6,N6,N6-trimethyllysine; alternate" evidence="1">
    <location>
        <position position="28"/>
    </location>
</feature>
<feature type="modified residue" description="N6,N6-dimethyllysine; alternate" evidence="1">
    <location>
        <position position="28"/>
    </location>
</feature>
<feature type="modified residue" description="N6-acetyllysine; alternate" evidence="1">
    <location>
        <position position="28"/>
    </location>
</feature>
<feature type="modified residue" description="N6-methyllysine; alternate" evidence="1">
    <location>
        <position position="28"/>
    </location>
</feature>
<feature type="modified residue" description="N6,N6,N6-trimethyllysine; alternate" evidence="1">
    <location>
        <position position="37"/>
    </location>
</feature>
<feature type="modified residue" description="N6,N6-dimethyllysine; alternate" evidence="1">
    <location>
        <position position="37"/>
    </location>
</feature>
<feature type="modified residue" description="N6-acetyllysine; alternate" evidence="1">
    <location>
        <position position="37"/>
    </location>
</feature>
<feature type="modified residue" description="N6-methyllysine; alternate" evidence="1">
    <location>
        <position position="37"/>
    </location>
</feature>
<feature type="modified residue" description="N6-acetyllysine" evidence="1">
    <location>
        <position position="57"/>
    </location>
</feature>
<feature type="modified residue" description="N6-acetyllysine" evidence="1">
    <location>
        <position position="65"/>
    </location>
</feature>
<feature type="modified residue" description="N6,N6,N6-trimethyllysine; alternate" evidence="1">
    <location>
        <position position="80"/>
    </location>
</feature>
<feature type="modified residue" description="N6,N6-dimethyllysine; alternate" evidence="1">
    <location>
        <position position="80"/>
    </location>
</feature>
<feature type="modified residue" description="N6-methyllysine; alternate" evidence="1">
    <location>
        <position position="80"/>
    </location>
</feature>
<gene>
    <name type="primary">HHT3</name>
    <name type="ORF">PICST_69601</name>
</gene>
<proteinExistence type="inferred from homology"/>
<comment type="function">
    <text>Core component of nucleosome. Nucleosomes wrap and compact DNA into chromatin, limiting DNA accessibility to the cellular machineries which require DNA as a template. Histones thereby play a central role in transcription regulation, DNA repair, DNA replication and chromosomal stability. DNA accessibility is regulated via a complex set of post-translational modifications of histones, also called histone code, and nucleosome remodeling.</text>
</comment>
<comment type="subunit">
    <text>The nucleosome is a histone octamer containing two molecules each of H2A, H2B, H3 and H4 assembled in one H3-H4 heterotetramer and two H2A-H2B heterodimers. The octamer wraps approximately 147 bp of DNA.</text>
</comment>
<comment type="subcellular location">
    <subcellularLocation>
        <location evidence="1">Nucleus</location>
    </subcellularLocation>
    <subcellularLocation>
        <location evidence="1">Chromosome</location>
    </subcellularLocation>
</comment>
<comment type="PTM">
    <text evidence="1">Phosphorylated to form H3S10ph. H3S10ph promotes subsequent H3K14ac formation and is required for transcriptional activation through TBP recruitment to the promoters (By similarity).</text>
</comment>
<comment type="PTM">
    <text evidence="1">Mono-, di- and trimethylated by the COMPASS complex to form H3K4me1/2/3. H3K4me activates gene expression by regulating transcription elongation and plays a role in telomere length maintenance. H3K4me enrichment correlates with transcription levels, and occurs in a 5' to 3' gradient with H3K4me3 enrichment at the 5'-end of genes, shifting to H3K4me2 and then H3K4me1. Methylated by SET2 to form H3K36me. H3K36me represses gene expression. Methylated by DOT1 to form H3K79me. H3K79me is required for association of SIR proteins with telomeric regions and for telomeric silencing. The COMPASS-mediated formation of H3K4me2/3 and the DOT1-mediated formation of H3K79me require H2BK123ub1 (By similarity).</text>
</comment>
<comment type="PTM">
    <text evidence="1">Acetylation of histone H3 leads to transcriptional activation. H3K14ac formation by GCN5 is promoted by H3S10ph. H3K14ac can also be formed by ESA1. H3K56ac formation occurs predominantly in newly synthesized H3 molecules during G1, S and G2/M of the cell cycle and may be involved in DNA repair (By similarity).</text>
</comment>
<comment type="similarity">
    <text evidence="3">Belongs to the histone H3 family.</text>
</comment>
<comment type="caution">
    <text evidence="3">To ensure consistency between histone entries, we follow the 'Brno' nomenclature for histone modifications, with positions referring to those used in the literature for the 'closest' model organism. Due to slight variations in histone sequences between organisms and to the presence of initiator methionine in UniProtKB/Swiss-Prot sequences, the actual positions of modified amino acids in the sequence generally differ. In this entry the following conventions are used: H3K4me1/2/3 = mono-, di- and trimethylated Lys-5; H3K9ac = acetylated Lys-10; H3K9me1 = monomethylated Lys-10; H3S10ph = phosphorylated Ser-11; H3K14ac = acetylated Lys-15; H3K14me2 = dimethylated Lys-15; H3K18ac = acetylated Lys-19; H3K18me1 = monomethylated Lys-19; H3K23ac = acetylated Lys-24; H3K23me1 = monomethylated Lys-24; H3K27ac = acetylated Lys-28; H3K27me1/2/3 = mono-, di- and trimethylated Lys-28; H3K36ac = acetylated Lys-37; H3K36me1/2/3 = mono-, di- and trimethylated Lys-37; H3K56ac = acetylated Lys-57; H3K64ac = acetylated Lys-65; H3K79me1/2/3 = mono-, di- and trimethylated Lys-80.</text>
</comment>
<sequence>MARTKQTARKSTGGKAPRKQLASKAARKSAPVSGGVKKPHRYKPGTVALREIRRFQKSTELLIRKLPFQRLVREIAQDFKSDLRFQSSAIGALQEAVEAYLVSLFEDTNLCAIHAKRVTIQKKDIQLARRLRGERS</sequence>
<dbReference type="EMBL" id="AAVQ01000002">
    <property type="protein sequence ID" value="EAZ62856.1"/>
    <property type="molecule type" value="Genomic_DNA"/>
</dbReference>
<dbReference type="RefSeq" id="XP_001386879.1">
    <property type="nucleotide sequence ID" value="XM_001386842.1"/>
</dbReference>
<dbReference type="SMR" id="A3GHN6"/>
<dbReference type="STRING" id="322104.A3GHN6"/>
<dbReference type="GeneID" id="4851785"/>
<dbReference type="KEGG" id="pic:PICST_69601"/>
<dbReference type="eggNOG" id="KOG1745">
    <property type="taxonomic scope" value="Eukaryota"/>
</dbReference>
<dbReference type="HOGENOM" id="CLU_078295_4_0_1"/>
<dbReference type="InParanoid" id="A3GHN6"/>
<dbReference type="OMA" id="THRFKPG"/>
<dbReference type="OrthoDB" id="5326060at2759"/>
<dbReference type="Proteomes" id="UP000002258">
    <property type="component" value="Chromosome 1"/>
</dbReference>
<dbReference type="GO" id="GO:0000786">
    <property type="term" value="C:nucleosome"/>
    <property type="evidence" value="ECO:0007669"/>
    <property type="project" value="UniProtKB-KW"/>
</dbReference>
<dbReference type="GO" id="GO:0005634">
    <property type="term" value="C:nucleus"/>
    <property type="evidence" value="ECO:0007669"/>
    <property type="project" value="UniProtKB-SubCell"/>
</dbReference>
<dbReference type="GO" id="GO:0003677">
    <property type="term" value="F:DNA binding"/>
    <property type="evidence" value="ECO:0007669"/>
    <property type="project" value="UniProtKB-KW"/>
</dbReference>
<dbReference type="GO" id="GO:0046982">
    <property type="term" value="F:protein heterodimerization activity"/>
    <property type="evidence" value="ECO:0007669"/>
    <property type="project" value="InterPro"/>
</dbReference>
<dbReference type="GO" id="GO:0030527">
    <property type="term" value="F:structural constituent of chromatin"/>
    <property type="evidence" value="ECO:0007669"/>
    <property type="project" value="InterPro"/>
</dbReference>
<dbReference type="CDD" id="cd22911">
    <property type="entry name" value="HFD_H3"/>
    <property type="match status" value="1"/>
</dbReference>
<dbReference type="FunFam" id="1.10.20.10:FF:000010">
    <property type="entry name" value="Histone H3"/>
    <property type="match status" value="1"/>
</dbReference>
<dbReference type="Gene3D" id="1.10.20.10">
    <property type="entry name" value="Histone, subunit A"/>
    <property type="match status" value="1"/>
</dbReference>
<dbReference type="InterPro" id="IPR009072">
    <property type="entry name" value="Histone-fold"/>
</dbReference>
<dbReference type="InterPro" id="IPR007125">
    <property type="entry name" value="Histone_H2A/H2B/H3"/>
</dbReference>
<dbReference type="InterPro" id="IPR000164">
    <property type="entry name" value="Histone_H3/CENP-A"/>
</dbReference>
<dbReference type="PANTHER" id="PTHR11426">
    <property type="entry name" value="HISTONE H3"/>
    <property type="match status" value="1"/>
</dbReference>
<dbReference type="Pfam" id="PF00125">
    <property type="entry name" value="Histone"/>
    <property type="match status" value="1"/>
</dbReference>
<dbReference type="PRINTS" id="PR00622">
    <property type="entry name" value="HISTONEH3"/>
</dbReference>
<dbReference type="SMART" id="SM00428">
    <property type="entry name" value="H3"/>
    <property type="match status" value="1"/>
</dbReference>
<dbReference type="SUPFAM" id="SSF47113">
    <property type="entry name" value="Histone-fold"/>
    <property type="match status" value="1"/>
</dbReference>
<dbReference type="PROSITE" id="PS00322">
    <property type="entry name" value="HISTONE_H3_1"/>
    <property type="match status" value="1"/>
</dbReference>
<dbReference type="PROSITE" id="PS00959">
    <property type="entry name" value="HISTONE_H3_2"/>
    <property type="match status" value="1"/>
</dbReference>
<protein>
    <recommendedName>
        <fullName>Histone H3.3</fullName>
    </recommendedName>
</protein>
<evidence type="ECO:0000250" key="1"/>
<evidence type="ECO:0000256" key="2">
    <source>
        <dbReference type="SAM" id="MobiDB-lite"/>
    </source>
</evidence>
<evidence type="ECO:0000305" key="3"/>